<evidence type="ECO:0000250" key="1"/>
<evidence type="ECO:0000250" key="2">
    <source>
        <dbReference type="UniProtKB" id="Q9NRG4"/>
    </source>
</evidence>
<evidence type="ECO:0000255" key="3">
    <source>
        <dbReference type="PROSITE-ProRule" id="PRU00134"/>
    </source>
</evidence>
<evidence type="ECO:0000255" key="4">
    <source>
        <dbReference type="PROSITE-ProRule" id="PRU00190"/>
    </source>
</evidence>
<evidence type="ECO:0000269" key="5">
    <source>
    </source>
</evidence>
<feature type="chain" id="PRO_0000405846" description="N-lysine methyltransferase SMYD2">
    <location>
        <begin position="1"/>
        <end position="433"/>
    </location>
</feature>
<feature type="domain" description="SET" evidence="4">
    <location>
        <begin position="7"/>
        <end position="241"/>
    </location>
</feature>
<feature type="zinc finger region" description="MYND-type" evidence="3">
    <location>
        <begin position="52"/>
        <end position="90"/>
    </location>
</feature>
<feature type="binding site" evidence="1">
    <location>
        <begin position="17"/>
        <end position="19"/>
    </location>
    <ligand>
        <name>S-adenosyl-L-methionine</name>
        <dbReference type="ChEBI" id="CHEBI:59789"/>
    </ligand>
</feature>
<feature type="binding site" evidence="3">
    <location>
        <position position="52"/>
    </location>
    <ligand>
        <name>Zn(2+)</name>
        <dbReference type="ChEBI" id="CHEBI:29105"/>
        <label>1</label>
    </ligand>
</feature>
<feature type="binding site" evidence="3">
    <location>
        <position position="55"/>
    </location>
    <ligand>
        <name>Zn(2+)</name>
        <dbReference type="ChEBI" id="CHEBI:29105"/>
        <label>1</label>
    </ligand>
</feature>
<feature type="binding site" evidence="3">
    <location>
        <position position="65"/>
    </location>
    <ligand>
        <name>Zn(2+)</name>
        <dbReference type="ChEBI" id="CHEBI:29105"/>
        <label>2</label>
    </ligand>
</feature>
<feature type="binding site" evidence="3">
    <location>
        <position position="68"/>
    </location>
    <ligand>
        <name>Zn(2+)</name>
        <dbReference type="ChEBI" id="CHEBI:29105"/>
        <label>2</label>
    </ligand>
</feature>
<feature type="binding site" evidence="3">
    <location>
        <position position="74"/>
    </location>
    <ligand>
        <name>Zn(2+)</name>
        <dbReference type="ChEBI" id="CHEBI:29105"/>
        <label>1</label>
    </ligand>
</feature>
<feature type="binding site" evidence="3">
    <location>
        <position position="78"/>
    </location>
    <ligand>
        <name>Zn(2+)</name>
        <dbReference type="ChEBI" id="CHEBI:29105"/>
        <label>1</label>
    </ligand>
</feature>
<feature type="binding site" evidence="3">
    <location>
        <position position="86"/>
    </location>
    <ligand>
        <name>Zn(2+)</name>
        <dbReference type="ChEBI" id="CHEBI:29105"/>
        <label>2</label>
    </ligand>
</feature>
<feature type="binding site" evidence="3">
    <location>
        <position position="90"/>
    </location>
    <ligand>
        <name>Zn(2+)</name>
        <dbReference type="ChEBI" id="CHEBI:29105"/>
        <label>2</label>
    </ligand>
</feature>
<feature type="binding site" evidence="4">
    <location>
        <position position="137"/>
    </location>
    <ligand>
        <name>S-adenosyl-L-methionine</name>
        <dbReference type="ChEBI" id="CHEBI:59789"/>
    </ligand>
</feature>
<feature type="binding site" evidence="1">
    <location>
        <begin position="206"/>
        <end position="207"/>
    </location>
    <ligand>
        <name>S-adenosyl-L-methionine</name>
        <dbReference type="ChEBI" id="CHEBI:59789"/>
    </ligand>
</feature>
<feature type="binding site" evidence="1">
    <location>
        <begin position="258"/>
        <end position="260"/>
    </location>
    <ligand>
        <name>S-adenosyl-L-methionine</name>
        <dbReference type="ChEBI" id="CHEBI:59789"/>
    </ligand>
</feature>
<reference key="1">
    <citation type="journal article" date="2009" name="Anim. Genet.">
        <title>Mapping and expression analyses during porcine foetal muscle development of 12 genes involved in histone modifications.</title>
        <authorList>
            <person name="Peng Y.B."/>
            <person name="Yerle M."/>
            <person name="Liu B."/>
        </authorList>
    </citation>
    <scope>NUCLEOTIDE SEQUENCE [MRNA]</scope>
    <scope>DEVELOPMENTAL STAGE</scope>
</reference>
<organism>
    <name type="scientific">Sus scrofa</name>
    <name type="common">Pig</name>
    <dbReference type="NCBI Taxonomy" id="9823"/>
    <lineage>
        <taxon>Eukaryota</taxon>
        <taxon>Metazoa</taxon>
        <taxon>Chordata</taxon>
        <taxon>Craniata</taxon>
        <taxon>Vertebrata</taxon>
        <taxon>Euteleostomi</taxon>
        <taxon>Mammalia</taxon>
        <taxon>Eutheria</taxon>
        <taxon>Laurasiatheria</taxon>
        <taxon>Artiodactyla</taxon>
        <taxon>Suina</taxon>
        <taxon>Suidae</taxon>
        <taxon>Sus</taxon>
    </lineage>
</organism>
<name>SMYD2_PIG</name>
<proteinExistence type="evidence at transcript level"/>
<accession>C3RZA1</accession>
<keyword id="KW-0156">Chromatin regulator</keyword>
<keyword id="KW-0963">Cytoplasm</keyword>
<keyword id="KW-0479">Metal-binding</keyword>
<keyword id="KW-0489">Methyltransferase</keyword>
<keyword id="KW-0539">Nucleus</keyword>
<keyword id="KW-1185">Reference proteome</keyword>
<keyword id="KW-0949">S-adenosyl-L-methionine</keyword>
<keyword id="KW-0804">Transcription</keyword>
<keyword id="KW-0805">Transcription regulation</keyword>
<keyword id="KW-0808">Transferase</keyword>
<keyword id="KW-0862">Zinc</keyword>
<keyword id="KW-0863">Zinc-finger</keyword>
<comment type="function">
    <text evidence="2">Protein-lysine N-methyltransferase that methylates both histones and non-histone proteins, including p53/TP53 and RB1. Specifically trimethylates histone H3 'Lys-4' (H3K4me3) in vivo. The activity requires interaction with HSP90alpha. Shows even higher methyltransferase activity on p53/TP53. Monomethylates 'Lys-370' of p53/TP53, leading to decreased DNA-binding activity and subsequent transcriptional regulation activity of p53/TP53. Monomethylates RB1 at 'Lys-860'.</text>
</comment>
<comment type="catalytic activity">
    <reaction evidence="2">
        <text>L-lysyl(4)-[histone H3] + 3 S-adenosyl-L-methionine = N(6),N(6),N(6)-trimethyl-L-lysyl(4)-[histone H3] + 3 S-adenosyl-L-homocysteine + 3 H(+)</text>
        <dbReference type="Rhea" id="RHEA:60260"/>
        <dbReference type="Rhea" id="RHEA-COMP:15537"/>
        <dbReference type="Rhea" id="RHEA-COMP:15547"/>
        <dbReference type="ChEBI" id="CHEBI:15378"/>
        <dbReference type="ChEBI" id="CHEBI:29969"/>
        <dbReference type="ChEBI" id="CHEBI:57856"/>
        <dbReference type="ChEBI" id="CHEBI:59789"/>
        <dbReference type="ChEBI" id="CHEBI:61961"/>
        <dbReference type="EC" id="2.1.1.354"/>
    </reaction>
</comment>
<comment type="catalytic activity">
    <reaction evidence="2">
        <text>L-lysyl-[protein] + S-adenosyl-L-methionine = N(6)-methyl-L-lysyl-[protein] + S-adenosyl-L-homocysteine + H(+)</text>
        <dbReference type="Rhea" id="RHEA:51736"/>
        <dbReference type="Rhea" id="RHEA-COMP:9752"/>
        <dbReference type="Rhea" id="RHEA-COMP:13053"/>
        <dbReference type="ChEBI" id="CHEBI:15378"/>
        <dbReference type="ChEBI" id="CHEBI:29969"/>
        <dbReference type="ChEBI" id="CHEBI:57856"/>
        <dbReference type="ChEBI" id="CHEBI:59789"/>
        <dbReference type="ChEBI" id="CHEBI:61929"/>
    </reaction>
</comment>
<comment type="subunit">
    <text evidence="1">Interacts with RNA polymerase II and HELZ. Interacts with SIN3A and HDAC1. Interacts (via MYND-type zinc finger) with EPB41L3. Interacts (via SET domain) with p53/TP53. Interacts with RB1 and HSP90AA1 (By similarity).</text>
</comment>
<comment type="subcellular location">
    <subcellularLocation>
        <location evidence="1">Cytoplasm</location>
        <location evidence="1">Cytosol</location>
    </subcellularLocation>
    <subcellularLocation>
        <location evidence="1">Nucleus</location>
    </subcellularLocation>
</comment>
<comment type="developmental stage">
    <text evidence="5">During fetal muscle development, expression increases from 33 to 90 dpc.</text>
</comment>
<comment type="similarity">
    <text evidence="4">Belongs to the class V-like SAM-binding methyltransferase superfamily.</text>
</comment>
<dbReference type="EC" id="2.1.1.-" evidence="2"/>
<dbReference type="EC" id="2.1.1.354" evidence="2"/>
<dbReference type="EMBL" id="EU661943">
    <property type="protein sequence ID" value="ACH71265.1"/>
    <property type="molecule type" value="mRNA"/>
</dbReference>
<dbReference type="RefSeq" id="NP_001153563.1">
    <property type="nucleotide sequence ID" value="NM_001160091.1"/>
</dbReference>
<dbReference type="FunCoup" id="C3RZA1">
    <property type="interactions" value="137"/>
</dbReference>
<dbReference type="STRING" id="9823.ENSSSCP00000016522"/>
<dbReference type="PaxDb" id="9823-ENSSSCP00000016522"/>
<dbReference type="GeneID" id="100294706"/>
<dbReference type="KEGG" id="ssc:100294706"/>
<dbReference type="CTD" id="56950"/>
<dbReference type="eggNOG" id="KOG2084">
    <property type="taxonomic scope" value="Eukaryota"/>
</dbReference>
<dbReference type="InParanoid" id="C3RZA1"/>
<dbReference type="OrthoDB" id="5945798at2759"/>
<dbReference type="Proteomes" id="UP000008227">
    <property type="component" value="Unplaced"/>
</dbReference>
<dbReference type="Proteomes" id="UP000314985">
    <property type="component" value="Unplaced"/>
</dbReference>
<dbReference type="Proteomes" id="UP000694570">
    <property type="component" value="Unplaced"/>
</dbReference>
<dbReference type="Proteomes" id="UP000694571">
    <property type="component" value="Unplaced"/>
</dbReference>
<dbReference type="Proteomes" id="UP000694720">
    <property type="component" value="Unplaced"/>
</dbReference>
<dbReference type="Proteomes" id="UP000694722">
    <property type="component" value="Unplaced"/>
</dbReference>
<dbReference type="Proteomes" id="UP000694723">
    <property type="component" value="Unplaced"/>
</dbReference>
<dbReference type="Proteomes" id="UP000694724">
    <property type="component" value="Unplaced"/>
</dbReference>
<dbReference type="Proteomes" id="UP000694725">
    <property type="component" value="Unplaced"/>
</dbReference>
<dbReference type="Proteomes" id="UP000694726">
    <property type="component" value="Unplaced"/>
</dbReference>
<dbReference type="Proteomes" id="UP000694727">
    <property type="component" value="Unplaced"/>
</dbReference>
<dbReference type="Proteomes" id="UP000694728">
    <property type="component" value="Unplaced"/>
</dbReference>
<dbReference type="GO" id="GO:0005737">
    <property type="term" value="C:cytoplasm"/>
    <property type="evidence" value="ECO:0000250"/>
    <property type="project" value="UniProtKB"/>
</dbReference>
<dbReference type="GO" id="GO:0005829">
    <property type="term" value="C:cytosol"/>
    <property type="evidence" value="ECO:0000250"/>
    <property type="project" value="UniProtKB"/>
</dbReference>
<dbReference type="GO" id="GO:0005634">
    <property type="term" value="C:nucleus"/>
    <property type="evidence" value="ECO:0000250"/>
    <property type="project" value="UniProtKB"/>
</dbReference>
<dbReference type="GO" id="GO:0046975">
    <property type="term" value="F:histone H3K36 methyltransferase activity"/>
    <property type="evidence" value="ECO:0000250"/>
    <property type="project" value="UniProtKB"/>
</dbReference>
<dbReference type="GO" id="GO:0140999">
    <property type="term" value="F:histone H3K4 trimethyltransferase activity"/>
    <property type="evidence" value="ECO:0007669"/>
    <property type="project" value="UniProtKB-EC"/>
</dbReference>
<dbReference type="GO" id="GO:0016279">
    <property type="term" value="F:protein-lysine N-methyltransferase activity"/>
    <property type="evidence" value="ECO:0000250"/>
    <property type="project" value="UniProtKB"/>
</dbReference>
<dbReference type="GO" id="GO:0000993">
    <property type="term" value="F:RNA polymerase II complex binding"/>
    <property type="evidence" value="ECO:0000250"/>
    <property type="project" value="UniProtKB"/>
</dbReference>
<dbReference type="GO" id="GO:0008270">
    <property type="term" value="F:zinc ion binding"/>
    <property type="evidence" value="ECO:0007669"/>
    <property type="project" value="UniProtKB-KW"/>
</dbReference>
<dbReference type="GO" id="GO:0008285">
    <property type="term" value="P:negative regulation of cell population proliferation"/>
    <property type="evidence" value="ECO:0000250"/>
    <property type="project" value="UniProtKB"/>
</dbReference>
<dbReference type="GO" id="GO:0000122">
    <property type="term" value="P:negative regulation of transcription by RNA polymerase II"/>
    <property type="evidence" value="ECO:0000250"/>
    <property type="project" value="UniProtKB"/>
</dbReference>
<dbReference type="GO" id="GO:0018027">
    <property type="term" value="P:peptidyl-lysine dimethylation"/>
    <property type="evidence" value="ECO:0000250"/>
    <property type="project" value="UniProtKB"/>
</dbReference>
<dbReference type="GO" id="GO:0018026">
    <property type="term" value="P:peptidyl-lysine monomethylation"/>
    <property type="evidence" value="ECO:0000250"/>
    <property type="project" value="UniProtKB"/>
</dbReference>
<dbReference type="GO" id="GO:0043516">
    <property type="term" value="P:regulation of DNA damage response, signal transduction by p53 class mediator"/>
    <property type="evidence" value="ECO:0000250"/>
    <property type="project" value="UniProtKB"/>
</dbReference>
<dbReference type="CDD" id="cd19202">
    <property type="entry name" value="SET_SMYD2"/>
    <property type="match status" value="1"/>
</dbReference>
<dbReference type="FunFam" id="2.170.270.10:FF:000013">
    <property type="entry name" value="Histone-lysine N-methyltransferase SMYD1 isoform 1"/>
    <property type="match status" value="1"/>
</dbReference>
<dbReference type="FunFam" id="1.10.220.160:FF:000001">
    <property type="entry name" value="N-lysine methyltransferase SMYD2 isoform X1"/>
    <property type="match status" value="1"/>
</dbReference>
<dbReference type="FunFam" id="1.25.40.970:FF:000002">
    <property type="entry name" value="N-lysine methyltransferase SMYD2 isoform X1"/>
    <property type="match status" value="1"/>
</dbReference>
<dbReference type="FunFam" id="6.10.140.2220:FF:000013">
    <property type="entry name" value="N-lysine methyltransferase SMYD2 isoform X1"/>
    <property type="match status" value="1"/>
</dbReference>
<dbReference type="FunFam" id="1.25.40.10:FF:000249">
    <property type="entry name" value="N-lysine methyltransferase SMYD2 isoform X2"/>
    <property type="match status" value="1"/>
</dbReference>
<dbReference type="Gene3D" id="1.10.220.160">
    <property type="match status" value="1"/>
</dbReference>
<dbReference type="Gene3D" id="1.25.40.970">
    <property type="match status" value="1"/>
</dbReference>
<dbReference type="Gene3D" id="6.10.140.2220">
    <property type="match status" value="1"/>
</dbReference>
<dbReference type="Gene3D" id="2.170.270.10">
    <property type="entry name" value="SET domain"/>
    <property type="match status" value="1"/>
</dbReference>
<dbReference type="Gene3D" id="1.25.40.10">
    <property type="entry name" value="Tetratricopeptide repeat domain"/>
    <property type="match status" value="1"/>
</dbReference>
<dbReference type="InterPro" id="IPR050869">
    <property type="entry name" value="H3K4_H4K5_MeTrfase"/>
</dbReference>
<dbReference type="InterPro" id="IPR001214">
    <property type="entry name" value="SET_dom"/>
</dbReference>
<dbReference type="InterPro" id="IPR046341">
    <property type="entry name" value="SET_dom_sf"/>
</dbReference>
<dbReference type="InterPro" id="IPR044419">
    <property type="entry name" value="SMYD2_SET"/>
</dbReference>
<dbReference type="InterPro" id="IPR011990">
    <property type="entry name" value="TPR-like_helical_dom_sf"/>
</dbReference>
<dbReference type="InterPro" id="IPR002893">
    <property type="entry name" value="Znf_MYND"/>
</dbReference>
<dbReference type="PANTHER" id="PTHR12197">
    <property type="entry name" value="HISTONE-LYSINE N-METHYLTRANSFERASE SMYD"/>
    <property type="match status" value="1"/>
</dbReference>
<dbReference type="PANTHER" id="PTHR12197:SF193">
    <property type="entry name" value="N-LYSINE METHYLTRANSFERASE SMYD2"/>
    <property type="match status" value="1"/>
</dbReference>
<dbReference type="Pfam" id="PF00856">
    <property type="entry name" value="SET"/>
    <property type="match status" value="1"/>
</dbReference>
<dbReference type="Pfam" id="PF01753">
    <property type="entry name" value="zf-MYND"/>
    <property type="match status" value="1"/>
</dbReference>
<dbReference type="SMART" id="SM00317">
    <property type="entry name" value="SET"/>
    <property type="match status" value="1"/>
</dbReference>
<dbReference type="SUPFAM" id="SSF82199">
    <property type="entry name" value="SET domain"/>
    <property type="match status" value="1"/>
</dbReference>
<dbReference type="SUPFAM" id="SSF48452">
    <property type="entry name" value="TPR-like"/>
    <property type="match status" value="1"/>
</dbReference>
<dbReference type="PROSITE" id="PS50280">
    <property type="entry name" value="SET"/>
    <property type="match status" value="1"/>
</dbReference>
<dbReference type="PROSITE" id="PS01360">
    <property type="entry name" value="ZF_MYND_1"/>
    <property type="match status" value="1"/>
</dbReference>
<dbReference type="PROSITE" id="PS50865">
    <property type="entry name" value="ZF_MYND_2"/>
    <property type="match status" value="1"/>
</dbReference>
<sequence length="433" mass="49870">MRAEGDGGLERFCSPGKGRGLRALQPFQVGDLLFSCPAYAYVLTVNERGNHCEFCFARKEGLSKCGRCKQAFYCNVECQKEDWPMHKLECSPMVVFGENWNPSETVRLTARILAKQKIHPERTPSEKLLAVKEFESHLDKLDNEKRDLIQSDIAALHHFYSKHLEFPDSDSLVVLFAQVNCNGFTIEDEELSHLGSXIFPDVALMNHSCCPNVIVTYKGTLAEVRAVQEIHPGEEVFTSYIDLLYPTEDRNDRLRDSYFFTCECQECTTKDKDKAKVEIRKLNDPPKAEAIRDMVRYARNVIEEFRRAKHYKSPSELLEICELSQEKMSCVFEDSNVYMLHMMYQAMGVCLYMQDWEGALRYGQKIIQPYSKHYPLYSLNVASMWLKLGRLYMGLENKAAGERALRKAIAIMEVAHGKDHPYISEIKQEIESH</sequence>
<gene>
    <name type="primary">SMYD2</name>
</gene>
<protein>
    <recommendedName>
        <fullName>N-lysine methyltransferase SMYD2</fullName>
        <ecNumber evidence="2">2.1.1.-</ecNumber>
    </recommendedName>
    <alternativeName>
        <fullName>Histone methyltransferase SMYD2</fullName>
        <ecNumber evidence="2">2.1.1.354</ecNumber>
    </alternativeName>
    <alternativeName>
        <fullName>SET and MYND domain-containing protein 2</fullName>
    </alternativeName>
</protein>